<keyword id="KW-0067">ATP-binding</keyword>
<keyword id="KW-0315">Glutamine amidotransferase</keyword>
<keyword id="KW-0436">Ligase</keyword>
<keyword id="KW-0460">Magnesium</keyword>
<keyword id="KW-0479">Metal-binding</keyword>
<keyword id="KW-0547">Nucleotide-binding</keyword>
<keyword id="KW-0665">Pyrimidine biosynthesis</keyword>
<gene>
    <name evidence="1" type="primary">pyrG</name>
    <name type="ordered locus">Shewana3_1115</name>
</gene>
<accession>A0KU81</accession>
<sequence length="546" mass="60222">MTTRYIFVTGGVVSSLGKGIAAASLAAILEARGLNVTIMKLDPYINVDPGTMSPTQHGEVFVTEDGAETDLDLGHYERFIRTKMNRRNNFTTGRIYEEVLRKERRGDYLGATIQVIPHITNAIKEKVIAGGEGHDVAIVEIGGTVGDIESLPFLESIRQLGVELGRDRTLFMHLTLVPFLGAAGEVKTKPTQHSVKELRSIGIAPDVLICRGDRAIPANERAKISLFCNVEERAVISLKDVDSIYKIPALLRSQGLDDLVVKRFGLECREADLSEWENVIYQEANPNGEVVIGMVGKYIELPDAYKSVNEALKHAGLKNRVSVSIKYIDSQTVEAKGDEVLQGLDGILVPGGFGERGVEGKILAAKYARENELPYFGICLGMQVALIEFARNVAGMTDAHSTEFNKATPFPVVGLITEWVDEEGNVEQRHEASDLGGTMRLGAQLCHLLEGSKAAQAYKGNTCVERHRHRYEVNNKYRERLEQAGLVFSGLSSDRKLVEMIELKDHPWFVAGQFHPEFTSTPRDGHPLFEGFVAAASAHQKRDLKK</sequence>
<evidence type="ECO:0000255" key="1">
    <source>
        <dbReference type="HAMAP-Rule" id="MF_01227"/>
    </source>
</evidence>
<organism>
    <name type="scientific">Shewanella sp. (strain ANA-3)</name>
    <dbReference type="NCBI Taxonomy" id="94122"/>
    <lineage>
        <taxon>Bacteria</taxon>
        <taxon>Pseudomonadati</taxon>
        <taxon>Pseudomonadota</taxon>
        <taxon>Gammaproteobacteria</taxon>
        <taxon>Alteromonadales</taxon>
        <taxon>Shewanellaceae</taxon>
        <taxon>Shewanella</taxon>
    </lineage>
</organism>
<proteinExistence type="inferred from homology"/>
<name>PYRG_SHESA</name>
<feature type="chain" id="PRO_1000139575" description="CTP synthase">
    <location>
        <begin position="1"/>
        <end position="546"/>
    </location>
</feature>
<feature type="domain" description="Glutamine amidotransferase type-1" evidence="1">
    <location>
        <begin position="291"/>
        <end position="542"/>
    </location>
</feature>
<feature type="region of interest" description="Amidoligase domain" evidence="1">
    <location>
        <begin position="1"/>
        <end position="266"/>
    </location>
</feature>
<feature type="active site" description="Nucleophile; for glutamine hydrolysis" evidence="1">
    <location>
        <position position="379"/>
    </location>
</feature>
<feature type="active site" evidence="1">
    <location>
        <position position="515"/>
    </location>
</feature>
<feature type="active site" evidence="1">
    <location>
        <position position="517"/>
    </location>
</feature>
<feature type="binding site" evidence="1">
    <location>
        <position position="14"/>
    </location>
    <ligand>
        <name>CTP</name>
        <dbReference type="ChEBI" id="CHEBI:37563"/>
        <note>allosteric inhibitor</note>
    </ligand>
</feature>
<feature type="binding site" evidence="1">
    <location>
        <position position="14"/>
    </location>
    <ligand>
        <name>UTP</name>
        <dbReference type="ChEBI" id="CHEBI:46398"/>
    </ligand>
</feature>
<feature type="binding site" evidence="1">
    <location>
        <begin position="15"/>
        <end position="20"/>
    </location>
    <ligand>
        <name>ATP</name>
        <dbReference type="ChEBI" id="CHEBI:30616"/>
    </ligand>
</feature>
<feature type="binding site" evidence="1">
    <location>
        <position position="72"/>
    </location>
    <ligand>
        <name>ATP</name>
        <dbReference type="ChEBI" id="CHEBI:30616"/>
    </ligand>
</feature>
<feature type="binding site" evidence="1">
    <location>
        <position position="72"/>
    </location>
    <ligand>
        <name>Mg(2+)</name>
        <dbReference type="ChEBI" id="CHEBI:18420"/>
    </ligand>
</feature>
<feature type="binding site" evidence="1">
    <location>
        <position position="140"/>
    </location>
    <ligand>
        <name>Mg(2+)</name>
        <dbReference type="ChEBI" id="CHEBI:18420"/>
    </ligand>
</feature>
<feature type="binding site" evidence="1">
    <location>
        <begin position="147"/>
        <end position="149"/>
    </location>
    <ligand>
        <name>CTP</name>
        <dbReference type="ChEBI" id="CHEBI:37563"/>
        <note>allosteric inhibitor</note>
    </ligand>
</feature>
<feature type="binding site" evidence="1">
    <location>
        <begin position="187"/>
        <end position="192"/>
    </location>
    <ligand>
        <name>CTP</name>
        <dbReference type="ChEBI" id="CHEBI:37563"/>
        <note>allosteric inhibitor</note>
    </ligand>
</feature>
<feature type="binding site" evidence="1">
    <location>
        <begin position="187"/>
        <end position="192"/>
    </location>
    <ligand>
        <name>UTP</name>
        <dbReference type="ChEBI" id="CHEBI:46398"/>
    </ligand>
</feature>
<feature type="binding site" evidence="1">
    <location>
        <position position="223"/>
    </location>
    <ligand>
        <name>CTP</name>
        <dbReference type="ChEBI" id="CHEBI:37563"/>
        <note>allosteric inhibitor</note>
    </ligand>
</feature>
<feature type="binding site" evidence="1">
    <location>
        <position position="223"/>
    </location>
    <ligand>
        <name>UTP</name>
        <dbReference type="ChEBI" id="CHEBI:46398"/>
    </ligand>
</feature>
<feature type="binding site" evidence="1">
    <location>
        <begin position="239"/>
        <end position="241"/>
    </location>
    <ligand>
        <name>ATP</name>
        <dbReference type="ChEBI" id="CHEBI:30616"/>
    </ligand>
</feature>
<feature type="binding site" evidence="1">
    <location>
        <position position="352"/>
    </location>
    <ligand>
        <name>L-glutamine</name>
        <dbReference type="ChEBI" id="CHEBI:58359"/>
    </ligand>
</feature>
<feature type="binding site" evidence="1">
    <location>
        <begin position="380"/>
        <end position="383"/>
    </location>
    <ligand>
        <name>L-glutamine</name>
        <dbReference type="ChEBI" id="CHEBI:58359"/>
    </ligand>
</feature>
<feature type="binding site" evidence="1">
    <location>
        <position position="403"/>
    </location>
    <ligand>
        <name>L-glutamine</name>
        <dbReference type="ChEBI" id="CHEBI:58359"/>
    </ligand>
</feature>
<feature type="binding site" evidence="1">
    <location>
        <position position="470"/>
    </location>
    <ligand>
        <name>L-glutamine</name>
        <dbReference type="ChEBI" id="CHEBI:58359"/>
    </ligand>
</feature>
<comment type="function">
    <text evidence="1">Catalyzes the ATP-dependent amination of UTP to CTP with either L-glutamine or ammonia as the source of nitrogen. Regulates intracellular CTP levels through interactions with the four ribonucleotide triphosphates.</text>
</comment>
<comment type="catalytic activity">
    <reaction evidence="1">
        <text>UTP + L-glutamine + ATP + H2O = CTP + L-glutamate + ADP + phosphate + 2 H(+)</text>
        <dbReference type="Rhea" id="RHEA:26426"/>
        <dbReference type="ChEBI" id="CHEBI:15377"/>
        <dbReference type="ChEBI" id="CHEBI:15378"/>
        <dbReference type="ChEBI" id="CHEBI:29985"/>
        <dbReference type="ChEBI" id="CHEBI:30616"/>
        <dbReference type="ChEBI" id="CHEBI:37563"/>
        <dbReference type="ChEBI" id="CHEBI:43474"/>
        <dbReference type="ChEBI" id="CHEBI:46398"/>
        <dbReference type="ChEBI" id="CHEBI:58359"/>
        <dbReference type="ChEBI" id="CHEBI:456216"/>
        <dbReference type="EC" id="6.3.4.2"/>
    </reaction>
</comment>
<comment type="catalytic activity">
    <reaction evidence="1">
        <text>L-glutamine + H2O = L-glutamate + NH4(+)</text>
        <dbReference type="Rhea" id="RHEA:15889"/>
        <dbReference type="ChEBI" id="CHEBI:15377"/>
        <dbReference type="ChEBI" id="CHEBI:28938"/>
        <dbReference type="ChEBI" id="CHEBI:29985"/>
        <dbReference type="ChEBI" id="CHEBI:58359"/>
    </reaction>
</comment>
<comment type="catalytic activity">
    <reaction evidence="1">
        <text>UTP + NH4(+) + ATP = CTP + ADP + phosphate + 2 H(+)</text>
        <dbReference type="Rhea" id="RHEA:16597"/>
        <dbReference type="ChEBI" id="CHEBI:15378"/>
        <dbReference type="ChEBI" id="CHEBI:28938"/>
        <dbReference type="ChEBI" id="CHEBI:30616"/>
        <dbReference type="ChEBI" id="CHEBI:37563"/>
        <dbReference type="ChEBI" id="CHEBI:43474"/>
        <dbReference type="ChEBI" id="CHEBI:46398"/>
        <dbReference type="ChEBI" id="CHEBI:456216"/>
    </reaction>
</comment>
<comment type="activity regulation">
    <text evidence="1">Allosterically activated by GTP, when glutamine is the substrate; GTP has no effect on the reaction when ammonia is the substrate. The allosteric effector GTP functions by stabilizing the protein conformation that binds the tetrahedral intermediate(s) formed during glutamine hydrolysis. Inhibited by the product CTP, via allosteric rather than competitive inhibition.</text>
</comment>
<comment type="pathway">
    <text evidence="1">Pyrimidine metabolism; CTP biosynthesis via de novo pathway; CTP from UDP: step 2/2.</text>
</comment>
<comment type="subunit">
    <text evidence="1">Homotetramer.</text>
</comment>
<comment type="miscellaneous">
    <text evidence="1">CTPSs have evolved a hybrid strategy for distinguishing between UTP and CTP. The overlapping regions of the product feedback inhibitory and substrate sites recognize a common feature in both compounds, the triphosphate moiety. To differentiate isosteric substrate and product pyrimidine rings, an additional pocket far from the expected kinase/ligase catalytic site, specifically recognizes the cytosine and ribose portions of the product inhibitor.</text>
</comment>
<comment type="similarity">
    <text evidence="1">Belongs to the CTP synthase family.</text>
</comment>
<protein>
    <recommendedName>
        <fullName evidence="1">CTP synthase</fullName>
        <ecNumber evidence="1">6.3.4.2</ecNumber>
    </recommendedName>
    <alternativeName>
        <fullName evidence="1">Cytidine 5'-triphosphate synthase</fullName>
    </alternativeName>
    <alternativeName>
        <fullName evidence="1">Cytidine triphosphate synthetase</fullName>
        <shortName evidence="1">CTP synthetase</shortName>
        <shortName evidence="1">CTPS</shortName>
    </alternativeName>
    <alternativeName>
        <fullName evidence="1">UTP--ammonia ligase</fullName>
    </alternativeName>
</protein>
<dbReference type="EC" id="6.3.4.2" evidence="1"/>
<dbReference type="EMBL" id="CP000469">
    <property type="protein sequence ID" value="ABK47350.1"/>
    <property type="molecule type" value="Genomic_DNA"/>
</dbReference>
<dbReference type="RefSeq" id="WP_011716217.1">
    <property type="nucleotide sequence ID" value="NC_008577.1"/>
</dbReference>
<dbReference type="SMR" id="A0KU81"/>
<dbReference type="STRING" id="94122.Shewana3_1115"/>
<dbReference type="KEGG" id="shn:Shewana3_1115"/>
<dbReference type="eggNOG" id="COG0504">
    <property type="taxonomic scope" value="Bacteria"/>
</dbReference>
<dbReference type="HOGENOM" id="CLU_011675_5_0_6"/>
<dbReference type="OrthoDB" id="9801107at2"/>
<dbReference type="UniPathway" id="UPA00159">
    <property type="reaction ID" value="UER00277"/>
</dbReference>
<dbReference type="Proteomes" id="UP000002589">
    <property type="component" value="Chromosome"/>
</dbReference>
<dbReference type="GO" id="GO:0005829">
    <property type="term" value="C:cytosol"/>
    <property type="evidence" value="ECO:0007669"/>
    <property type="project" value="TreeGrafter"/>
</dbReference>
<dbReference type="GO" id="GO:0005524">
    <property type="term" value="F:ATP binding"/>
    <property type="evidence" value="ECO:0007669"/>
    <property type="project" value="UniProtKB-KW"/>
</dbReference>
<dbReference type="GO" id="GO:0003883">
    <property type="term" value="F:CTP synthase activity"/>
    <property type="evidence" value="ECO:0007669"/>
    <property type="project" value="UniProtKB-UniRule"/>
</dbReference>
<dbReference type="GO" id="GO:0004359">
    <property type="term" value="F:glutaminase activity"/>
    <property type="evidence" value="ECO:0007669"/>
    <property type="project" value="RHEA"/>
</dbReference>
<dbReference type="GO" id="GO:0042802">
    <property type="term" value="F:identical protein binding"/>
    <property type="evidence" value="ECO:0007669"/>
    <property type="project" value="TreeGrafter"/>
</dbReference>
<dbReference type="GO" id="GO:0046872">
    <property type="term" value="F:metal ion binding"/>
    <property type="evidence" value="ECO:0007669"/>
    <property type="project" value="UniProtKB-KW"/>
</dbReference>
<dbReference type="GO" id="GO:0044210">
    <property type="term" value="P:'de novo' CTP biosynthetic process"/>
    <property type="evidence" value="ECO:0007669"/>
    <property type="project" value="UniProtKB-UniRule"/>
</dbReference>
<dbReference type="GO" id="GO:0019856">
    <property type="term" value="P:pyrimidine nucleobase biosynthetic process"/>
    <property type="evidence" value="ECO:0007669"/>
    <property type="project" value="TreeGrafter"/>
</dbReference>
<dbReference type="CDD" id="cd03113">
    <property type="entry name" value="CTPS_N"/>
    <property type="match status" value="1"/>
</dbReference>
<dbReference type="CDD" id="cd01746">
    <property type="entry name" value="GATase1_CTP_Synthase"/>
    <property type="match status" value="1"/>
</dbReference>
<dbReference type="FunFam" id="3.40.50.300:FF:000009">
    <property type="entry name" value="CTP synthase"/>
    <property type="match status" value="1"/>
</dbReference>
<dbReference type="FunFam" id="3.40.50.880:FF:000002">
    <property type="entry name" value="CTP synthase"/>
    <property type="match status" value="1"/>
</dbReference>
<dbReference type="Gene3D" id="3.40.50.880">
    <property type="match status" value="1"/>
</dbReference>
<dbReference type="Gene3D" id="3.40.50.300">
    <property type="entry name" value="P-loop containing nucleotide triphosphate hydrolases"/>
    <property type="match status" value="1"/>
</dbReference>
<dbReference type="HAMAP" id="MF_01227">
    <property type="entry name" value="PyrG"/>
    <property type="match status" value="1"/>
</dbReference>
<dbReference type="InterPro" id="IPR029062">
    <property type="entry name" value="Class_I_gatase-like"/>
</dbReference>
<dbReference type="InterPro" id="IPR004468">
    <property type="entry name" value="CTP_synthase"/>
</dbReference>
<dbReference type="InterPro" id="IPR017456">
    <property type="entry name" value="CTP_synthase_N"/>
</dbReference>
<dbReference type="InterPro" id="IPR017926">
    <property type="entry name" value="GATASE"/>
</dbReference>
<dbReference type="InterPro" id="IPR033828">
    <property type="entry name" value="GATase1_CTP_Synthase"/>
</dbReference>
<dbReference type="InterPro" id="IPR027417">
    <property type="entry name" value="P-loop_NTPase"/>
</dbReference>
<dbReference type="NCBIfam" id="NF003792">
    <property type="entry name" value="PRK05380.1"/>
    <property type="match status" value="1"/>
</dbReference>
<dbReference type="NCBIfam" id="TIGR00337">
    <property type="entry name" value="PyrG"/>
    <property type="match status" value="1"/>
</dbReference>
<dbReference type="PANTHER" id="PTHR11550">
    <property type="entry name" value="CTP SYNTHASE"/>
    <property type="match status" value="1"/>
</dbReference>
<dbReference type="PANTHER" id="PTHR11550:SF0">
    <property type="entry name" value="CTP SYNTHASE-RELATED"/>
    <property type="match status" value="1"/>
</dbReference>
<dbReference type="Pfam" id="PF06418">
    <property type="entry name" value="CTP_synth_N"/>
    <property type="match status" value="1"/>
</dbReference>
<dbReference type="Pfam" id="PF00117">
    <property type="entry name" value="GATase"/>
    <property type="match status" value="1"/>
</dbReference>
<dbReference type="SUPFAM" id="SSF52317">
    <property type="entry name" value="Class I glutamine amidotransferase-like"/>
    <property type="match status" value="1"/>
</dbReference>
<dbReference type="SUPFAM" id="SSF52540">
    <property type="entry name" value="P-loop containing nucleoside triphosphate hydrolases"/>
    <property type="match status" value="1"/>
</dbReference>
<dbReference type="PROSITE" id="PS51273">
    <property type="entry name" value="GATASE_TYPE_1"/>
    <property type="match status" value="1"/>
</dbReference>
<reference key="1">
    <citation type="submission" date="2006-09" db="EMBL/GenBank/DDBJ databases">
        <title>Complete sequence of chromosome 1 of Shewanella sp. ANA-3.</title>
        <authorList>
            <person name="Copeland A."/>
            <person name="Lucas S."/>
            <person name="Lapidus A."/>
            <person name="Barry K."/>
            <person name="Detter J.C."/>
            <person name="Glavina del Rio T."/>
            <person name="Hammon N."/>
            <person name="Israni S."/>
            <person name="Dalin E."/>
            <person name="Tice H."/>
            <person name="Pitluck S."/>
            <person name="Chertkov O."/>
            <person name="Brettin T."/>
            <person name="Bruce D."/>
            <person name="Han C."/>
            <person name="Tapia R."/>
            <person name="Gilna P."/>
            <person name="Schmutz J."/>
            <person name="Larimer F."/>
            <person name="Land M."/>
            <person name="Hauser L."/>
            <person name="Kyrpides N."/>
            <person name="Kim E."/>
            <person name="Newman D."/>
            <person name="Salticov C."/>
            <person name="Konstantinidis K."/>
            <person name="Klappenback J."/>
            <person name="Tiedje J."/>
            <person name="Richardson P."/>
        </authorList>
    </citation>
    <scope>NUCLEOTIDE SEQUENCE [LARGE SCALE GENOMIC DNA]</scope>
    <source>
        <strain>ANA-3</strain>
    </source>
</reference>